<accession>O44105</accession>
<proteinExistence type="evidence at transcript level"/>
<name>G3P2_DROSU</name>
<gene>
    <name type="primary">Gapdh2</name>
</gene>
<dbReference type="EC" id="1.2.1.12"/>
<dbReference type="EMBL" id="AF025810">
    <property type="protein sequence ID" value="AAB87895.1"/>
    <property type="molecule type" value="mRNA"/>
</dbReference>
<dbReference type="SMR" id="O44105"/>
<dbReference type="EnsemblMetazoa" id="XM_034797952.1">
    <property type="protein sequence ID" value="XP_034653843.1"/>
    <property type="gene ID" value="LOC117892029"/>
</dbReference>
<dbReference type="UniPathway" id="UPA00109">
    <property type="reaction ID" value="UER00184"/>
</dbReference>
<dbReference type="GO" id="GO:0005829">
    <property type="term" value="C:cytosol"/>
    <property type="evidence" value="ECO:0007669"/>
    <property type="project" value="TreeGrafter"/>
</dbReference>
<dbReference type="GO" id="GO:0004365">
    <property type="term" value="F:glyceraldehyde-3-phosphate dehydrogenase (NAD+) (phosphorylating) activity"/>
    <property type="evidence" value="ECO:0007669"/>
    <property type="project" value="UniProtKB-EC"/>
</dbReference>
<dbReference type="GO" id="GO:0051287">
    <property type="term" value="F:NAD binding"/>
    <property type="evidence" value="ECO:0007669"/>
    <property type="project" value="InterPro"/>
</dbReference>
<dbReference type="GO" id="GO:0050661">
    <property type="term" value="F:NADP binding"/>
    <property type="evidence" value="ECO:0007669"/>
    <property type="project" value="InterPro"/>
</dbReference>
<dbReference type="GO" id="GO:0006006">
    <property type="term" value="P:glucose metabolic process"/>
    <property type="evidence" value="ECO:0007669"/>
    <property type="project" value="InterPro"/>
</dbReference>
<dbReference type="GO" id="GO:0006096">
    <property type="term" value="P:glycolytic process"/>
    <property type="evidence" value="ECO:0007669"/>
    <property type="project" value="UniProtKB-UniPathway"/>
</dbReference>
<dbReference type="CDD" id="cd18126">
    <property type="entry name" value="GAPDH_I_C"/>
    <property type="match status" value="1"/>
</dbReference>
<dbReference type="CDD" id="cd05214">
    <property type="entry name" value="GAPDH_I_N"/>
    <property type="match status" value="1"/>
</dbReference>
<dbReference type="FunFam" id="3.30.360.10:FF:000001">
    <property type="entry name" value="Glyceraldehyde-3-phosphate dehydrogenase"/>
    <property type="match status" value="1"/>
</dbReference>
<dbReference type="FunFam" id="3.40.50.720:FF:000266">
    <property type="entry name" value="Glyceraldehyde-3-phosphate dehydrogenase"/>
    <property type="match status" value="1"/>
</dbReference>
<dbReference type="Gene3D" id="3.30.360.10">
    <property type="entry name" value="Dihydrodipicolinate Reductase, domain 2"/>
    <property type="match status" value="1"/>
</dbReference>
<dbReference type="Gene3D" id="3.40.50.720">
    <property type="entry name" value="NAD(P)-binding Rossmann-like Domain"/>
    <property type="match status" value="1"/>
</dbReference>
<dbReference type="InterPro" id="IPR020831">
    <property type="entry name" value="GlycerAld/Erythrose_P_DH"/>
</dbReference>
<dbReference type="InterPro" id="IPR020830">
    <property type="entry name" value="GlycerAld_3-P_DH_AS"/>
</dbReference>
<dbReference type="InterPro" id="IPR020829">
    <property type="entry name" value="GlycerAld_3-P_DH_cat"/>
</dbReference>
<dbReference type="InterPro" id="IPR020828">
    <property type="entry name" value="GlycerAld_3-P_DH_NAD(P)-bd"/>
</dbReference>
<dbReference type="InterPro" id="IPR006424">
    <property type="entry name" value="Glyceraldehyde-3-P_DH_1"/>
</dbReference>
<dbReference type="InterPro" id="IPR036291">
    <property type="entry name" value="NAD(P)-bd_dom_sf"/>
</dbReference>
<dbReference type="NCBIfam" id="TIGR01534">
    <property type="entry name" value="GAPDH-I"/>
    <property type="match status" value="1"/>
</dbReference>
<dbReference type="PANTHER" id="PTHR10836">
    <property type="entry name" value="GLYCERALDEHYDE 3-PHOSPHATE DEHYDROGENASE"/>
    <property type="match status" value="1"/>
</dbReference>
<dbReference type="PANTHER" id="PTHR10836:SF76">
    <property type="entry name" value="GLYCERALDEHYDE-3-PHOSPHATE DEHYDROGENASE-RELATED"/>
    <property type="match status" value="1"/>
</dbReference>
<dbReference type="Pfam" id="PF02800">
    <property type="entry name" value="Gp_dh_C"/>
    <property type="match status" value="1"/>
</dbReference>
<dbReference type="Pfam" id="PF00044">
    <property type="entry name" value="Gp_dh_N"/>
    <property type="match status" value="1"/>
</dbReference>
<dbReference type="PIRSF" id="PIRSF000149">
    <property type="entry name" value="GAP_DH"/>
    <property type="match status" value="1"/>
</dbReference>
<dbReference type="PRINTS" id="PR00078">
    <property type="entry name" value="G3PDHDRGNASE"/>
</dbReference>
<dbReference type="SMART" id="SM00846">
    <property type="entry name" value="Gp_dh_N"/>
    <property type="match status" value="1"/>
</dbReference>
<dbReference type="SUPFAM" id="SSF55347">
    <property type="entry name" value="Glyceraldehyde-3-phosphate dehydrogenase-like, C-terminal domain"/>
    <property type="match status" value="1"/>
</dbReference>
<dbReference type="SUPFAM" id="SSF51735">
    <property type="entry name" value="NAD(P)-binding Rossmann-fold domains"/>
    <property type="match status" value="1"/>
</dbReference>
<dbReference type="PROSITE" id="PS00071">
    <property type="entry name" value="GAPDH"/>
    <property type="match status" value="1"/>
</dbReference>
<feature type="chain" id="PRO_0000145525" description="Glyceraldehyde-3-phosphate dehydrogenase 2">
    <location>
        <begin position="1" status="less than"/>
        <end position="304" status="greater than"/>
    </location>
</feature>
<feature type="active site" description="Nucleophile" evidence="2">
    <location>
        <position position="139"/>
    </location>
</feature>
<feature type="binding site" evidence="1">
    <location>
        <begin position="1"/>
        <end position="2"/>
    </location>
    <ligand>
        <name>NAD(+)</name>
        <dbReference type="ChEBI" id="CHEBI:57540"/>
    </ligand>
</feature>
<feature type="binding site" evidence="1">
    <location>
        <position position="22"/>
    </location>
    <ligand>
        <name>NAD(+)</name>
        <dbReference type="ChEBI" id="CHEBI:57540"/>
    </ligand>
</feature>
<feature type="binding site" evidence="1">
    <location>
        <position position="67"/>
    </location>
    <ligand>
        <name>NAD(+)</name>
        <dbReference type="ChEBI" id="CHEBI:57540"/>
    </ligand>
</feature>
<feature type="binding site" evidence="1">
    <location>
        <begin position="138"/>
        <end position="140"/>
    </location>
    <ligand>
        <name>D-glyceraldehyde 3-phosphate</name>
        <dbReference type="ChEBI" id="CHEBI:59776"/>
    </ligand>
</feature>
<feature type="binding site" evidence="1">
    <location>
        <position position="169"/>
    </location>
    <ligand>
        <name>D-glyceraldehyde 3-phosphate</name>
        <dbReference type="ChEBI" id="CHEBI:59776"/>
    </ligand>
</feature>
<feature type="binding site" evidence="1">
    <location>
        <begin position="198"/>
        <end position="199"/>
    </location>
    <ligand>
        <name>D-glyceraldehyde 3-phosphate</name>
        <dbReference type="ChEBI" id="CHEBI:59776"/>
    </ligand>
</feature>
<feature type="binding site" evidence="1">
    <location>
        <position position="221"/>
    </location>
    <ligand>
        <name>D-glyceraldehyde 3-phosphate</name>
        <dbReference type="ChEBI" id="CHEBI:59776"/>
    </ligand>
</feature>
<feature type="binding site" evidence="1">
    <location>
        <position position="303"/>
    </location>
    <ligand>
        <name>NAD(+)</name>
        <dbReference type="ChEBI" id="CHEBI:57540"/>
    </ligand>
</feature>
<feature type="site" description="Activates thiol group during catalysis" evidence="1">
    <location>
        <position position="166"/>
    </location>
</feature>
<feature type="non-terminal residue">
    <location>
        <position position="1"/>
    </location>
</feature>
<feature type="non-terminal residue">
    <location>
        <position position="304"/>
    </location>
</feature>
<organism>
    <name type="scientific">Drosophila subobscura</name>
    <name type="common">Fruit fly</name>
    <dbReference type="NCBI Taxonomy" id="7241"/>
    <lineage>
        <taxon>Eukaryota</taxon>
        <taxon>Metazoa</taxon>
        <taxon>Ecdysozoa</taxon>
        <taxon>Arthropoda</taxon>
        <taxon>Hexapoda</taxon>
        <taxon>Insecta</taxon>
        <taxon>Pterygota</taxon>
        <taxon>Neoptera</taxon>
        <taxon>Endopterygota</taxon>
        <taxon>Diptera</taxon>
        <taxon>Brachycera</taxon>
        <taxon>Muscomorpha</taxon>
        <taxon>Ephydroidea</taxon>
        <taxon>Drosophilidae</taxon>
        <taxon>Drosophila</taxon>
        <taxon>Sophophora</taxon>
    </lineage>
</organism>
<sequence>RIGRLVLRAAIDKGASVVAVNDPFIDVNYMVYLFKFDSTHGRFKGTVVAEGGFLVVNGQKITVFSERDPANINWASAGAEYVVESTGVFTTIEKASTHLKGGAKKVVISAPSADAPMFVCGVNLDAYKPDMKVVSNASCTTNCLAPLAKVINDNFEIVEGLMTTVHATTATQKTVDGPSGKLWRDGRGAAQNIIPAATGAAKAVGKVIPALNGKLTGMAFRVPTPNVSVVDLTVRLGKGASYDEIKAKVQEAANGPLKGILGYTDEEVVSTDFLSDTHSSVFDAKAGISLNDKFVKLISWYDNE</sequence>
<comment type="catalytic activity">
    <reaction evidence="2">
        <text>D-glyceraldehyde 3-phosphate + phosphate + NAD(+) = (2R)-3-phospho-glyceroyl phosphate + NADH + H(+)</text>
        <dbReference type="Rhea" id="RHEA:10300"/>
        <dbReference type="ChEBI" id="CHEBI:15378"/>
        <dbReference type="ChEBI" id="CHEBI:43474"/>
        <dbReference type="ChEBI" id="CHEBI:57540"/>
        <dbReference type="ChEBI" id="CHEBI:57604"/>
        <dbReference type="ChEBI" id="CHEBI:57945"/>
        <dbReference type="ChEBI" id="CHEBI:59776"/>
        <dbReference type="EC" id="1.2.1.12"/>
    </reaction>
</comment>
<comment type="pathway">
    <text>Carbohydrate degradation; glycolysis; pyruvate from D-glyceraldehyde 3-phosphate: step 1/5.</text>
</comment>
<comment type="subunit">
    <text>Homotetramer.</text>
</comment>
<comment type="subcellular location">
    <subcellularLocation>
        <location>Cytoplasm</location>
    </subcellularLocation>
</comment>
<comment type="similarity">
    <text evidence="3">Belongs to the glyceraldehyde-3-phosphate dehydrogenase family.</text>
</comment>
<reference key="1">
    <citation type="journal article" date="1998" name="Genetica">
        <title>The molecular clock revisited: the rate of synonymous vs. replacement change in Drosophila.</title>
        <authorList>
            <person name="Zeng L.-W."/>
            <person name="Comeron J.M."/>
            <person name="Chen B."/>
            <person name="Kreitman M."/>
        </authorList>
    </citation>
    <scope>NUCLEOTIDE SEQUENCE [MRNA]</scope>
</reference>
<protein>
    <recommendedName>
        <fullName>Glyceraldehyde-3-phosphate dehydrogenase 2</fullName>
        <ecNumber>1.2.1.12</ecNumber>
    </recommendedName>
    <alternativeName>
        <fullName>Glyceraldehyde-3-phosphate dehydrogenase II</fullName>
        <shortName>GAPDH II</shortName>
    </alternativeName>
</protein>
<evidence type="ECO:0000250" key="1"/>
<evidence type="ECO:0000255" key="2">
    <source>
        <dbReference type="PROSITE-ProRule" id="PRU10009"/>
    </source>
</evidence>
<evidence type="ECO:0000305" key="3"/>
<keyword id="KW-0963">Cytoplasm</keyword>
<keyword id="KW-0324">Glycolysis</keyword>
<keyword id="KW-0520">NAD</keyword>
<keyword id="KW-0560">Oxidoreductase</keyword>